<evidence type="ECO:0000255" key="1">
    <source>
        <dbReference type="HAMAP-Rule" id="MF_01365"/>
    </source>
</evidence>
<evidence type="ECO:0000305" key="2"/>
<organism>
    <name type="scientific">Spiroplasma citri</name>
    <dbReference type="NCBI Taxonomy" id="2133"/>
    <lineage>
        <taxon>Bacteria</taxon>
        <taxon>Bacillati</taxon>
        <taxon>Mycoplasmatota</taxon>
        <taxon>Mollicutes</taxon>
        <taxon>Entomoplasmatales</taxon>
        <taxon>Spiroplasmataceae</taxon>
        <taxon>Spiroplasma</taxon>
    </lineage>
</organism>
<sequence length="179" mass="19501">MSRIGNRELKIPVGLEVTIQPNNVIVKGVKGQLEQTIPSVITVVAKEGVVTTTRANDVKHSKQLHGTINSLIQGMLEGVSKGFKKELEINGVGYRAALVGDKLTLSLGYSHPVEYKIPQGITITLPKPTQIIVEGISKQLVGEVAANIRNYRKPEPYKGKGVKYKNEHIIRKEGKSAGK</sequence>
<reference key="1">
    <citation type="submission" date="2006-06" db="EMBL/GenBank/DDBJ databases">
        <title>The partial chromosome sequence of Spiroplasma citri GII3-3X.</title>
        <authorList>
            <person name="Carle P."/>
            <person name="Saillard C."/>
            <person name="Blanchard A."/>
            <person name="Carrere N."/>
            <person name="Carrere S."/>
            <person name="Duret S."/>
            <person name="Eveillard S."/>
            <person name="Gaurivaud P."/>
            <person name="Gourgues G."/>
            <person name="Gouzy J."/>
            <person name="Henry A."/>
            <person name="Salar P."/>
            <person name="Laigret F."/>
            <person name="Bove J.M."/>
            <person name="Renaudin J."/>
            <person name="Foissac X."/>
        </authorList>
    </citation>
    <scope>NUCLEOTIDE SEQUENCE [GENOMIC DNA]</scope>
    <source>
        <strain>GII-3-3X</strain>
    </source>
</reference>
<comment type="function">
    <text evidence="1">This protein binds to the 23S rRNA, and is important in its secondary structure. It is located near the subunit interface in the base of the L7/L12 stalk, and near the tRNA binding site of the peptidyltransferase center.</text>
</comment>
<comment type="subunit">
    <text evidence="1">Part of the 50S ribosomal subunit.</text>
</comment>
<comment type="similarity">
    <text evidence="1">Belongs to the universal ribosomal protein uL6 family.</text>
</comment>
<protein>
    <recommendedName>
        <fullName evidence="1">Large ribosomal subunit protein uL6</fullName>
    </recommendedName>
    <alternativeName>
        <fullName evidence="2">50S ribosomal protein L6</fullName>
    </alternativeName>
</protein>
<accession>Q14PJ7</accession>
<feature type="chain" id="PRO_0000260936" description="Large ribosomal subunit protein uL6">
    <location>
        <begin position="1"/>
        <end position="179"/>
    </location>
</feature>
<dbReference type="EMBL" id="AM285304">
    <property type="protein sequence ID" value="CAK98582.1"/>
    <property type="molecule type" value="Genomic_DNA"/>
</dbReference>
<dbReference type="RefSeq" id="WP_071936954.1">
    <property type="nucleotide sequence ID" value="NZ_CP013197.1"/>
</dbReference>
<dbReference type="SMR" id="Q14PJ7"/>
<dbReference type="STRING" id="2133.SCITRI_00346"/>
<dbReference type="GeneID" id="54238283"/>
<dbReference type="OrthoDB" id="9805007at2"/>
<dbReference type="GO" id="GO:0022625">
    <property type="term" value="C:cytosolic large ribosomal subunit"/>
    <property type="evidence" value="ECO:0007669"/>
    <property type="project" value="TreeGrafter"/>
</dbReference>
<dbReference type="GO" id="GO:0019843">
    <property type="term" value="F:rRNA binding"/>
    <property type="evidence" value="ECO:0007669"/>
    <property type="project" value="UniProtKB-UniRule"/>
</dbReference>
<dbReference type="GO" id="GO:0003735">
    <property type="term" value="F:structural constituent of ribosome"/>
    <property type="evidence" value="ECO:0007669"/>
    <property type="project" value="InterPro"/>
</dbReference>
<dbReference type="GO" id="GO:0002181">
    <property type="term" value="P:cytoplasmic translation"/>
    <property type="evidence" value="ECO:0007669"/>
    <property type="project" value="TreeGrafter"/>
</dbReference>
<dbReference type="FunFam" id="3.90.930.12:FF:000001">
    <property type="entry name" value="50S ribosomal protein L6"/>
    <property type="match status" value="1"/>
</dbReference>
<dbReference type="Gene3D" id="3.90.930.12">
    <property type="entry name" value="Ribosomal protein L6, alpha-beta domain"/>
    <property type="match status" value="2"/>
</dbReference>
<dbReference type="HAMAP" id="MF_01365_B">
    <property type="entry name" value="Ribosomal_uL6_B"/>
    <property type="match status" value="1"/>
</dbReference>
<dbReference type="InterPro" id="IPR000702">
    <property type="entry name" value="Ribosomal_uL6-like"/>
</dbReference>
<dbReference type="InterPro" id="IPR036789">
    <property type="entry name" value="Ribosomal_uL6-like_a/b-dom_sf"/>
</dbReference>
<dbReference type="InterPro" id="IPR020040">
    <property type="entry name" value="Ribosomal_uL6_a/b-dom"/>
</dbReference>
<dbReference type="InterPro" id="IPR019906">
    <property type="entry name" value="Ribosomal_uL6_bac-type"/>
</dbReference>
<dbReference type="InterPro" id="IPR002358">
    <property type="entry name" value="Ribosomal_uL6_CS"/>
</dbReference>
<dbReference type="NCBIfam" id="TIGR03654">
    <property type="entry name" value="L6_bact"/>
    <property type="match status" value="1"/>
</dbReference>
<dbReference type="PANTHER" id="PTHR11655">
    <property type="entry name" value="60S/50S RIBOSOMAL PROTEIN L6/L9"/>
    <property type="match status" value="1"/>
</dbReference>
<dbReference type="PANTHER" id="PTHR11655:SF14">
    <property type="entry name" value="LARGE RIBOSOMAL SUBUNIT PROTEIN UL6M"/>
    <property type="match status" value="1"/>
</dbReference>
<dbReference type="Pfam" id="PF00347">
    <property type="entry name" value="Ribosomal_L6"/>
    <property type="match status" value="2"/>
</dbReference>
<dbReference type="PIRSF" id="PIRSF002162">
    <property type="entry name" value="Ribosomal_L6"/>
    <property type="match status" value="1"/>
</dbReference>
<dbReference type="PRINTS" id="PR00059">
    <property type="entry name" value="RIBOSOMALL6"/>
</dbReference>
<dbReference type="SUPFAM" id="SSF56053">
    <property type="entry name" value="Ribosomal protein L6"/>
    <property type="match status" value="2"/>
</dbReference>
<dbReference type="PROSITE" id="PS00525">
    <property type="entry name" value="RIBOSOMAL_L6_1"/>
    <property type="match status" value="1"/>
</dbReference>
<proteinExistence type="inferred from homology"/>
<gene>
    <name evidence="1" type="primary">rplF</name>
    <name type="ORF">SPICI03_117</name>
</gene>
<keyword id="KW-0687">Ribonucleoprotein</keyword>
<keyword id="KW-0689">Ribosomal protein</keyword>
<keyword id="KW-0694">RNA-binding</keyword>
<keyword id="KW-0699">rRNA-binding</keyword>
<name>RL6_SPICI</name>